<proteinExistence type="predicted"/>
<sequence>MVRSLEEIIYIIYSDDSVVNISLASARCDGGPRRPLSRRGEEARRARAPSYEEQESSSFFHSKAHFFMWGRESMSFVYLHSVESYSLQFHDRCASYNDTFYPTNFTPIYIHTI</sequence>
<name>UL67_HCMVA</name>
<reference key="1">
    <citation type="journal article" date="1990" name="Curr. Top. Microbiol. Immunol.">
        <title>Analysis of the protein-coding content of the sequence of human cytomegalovirus strain AD169.</title>
        <authorList>
            <person name="Chee M.S."/>
            <person name="Bankier A.T."/>
            <person name="Beck S."/>
            <person name="Bohni R."/>
            <person name="Brown C.M."/>
            <person name="Cerny R."/>
            <person name="Horsnell T."/>
            <person name="Hutchison C.A. III"/>
            <person name="Kouzarides T."/>
            <person name="Martignetti J.A."/>
            <person name="Preddie E."/>
            <person name="Satchwell S.C."/>
            <person name="Tomlinson P."/>
            <person name="Weston K.M."/>
            <person name="Barrell B.G."/>
        </authorList>
    </citation>
    <scope>NUCLEOTIDE SEQUENCE [LARGE SCALE GENOMIC DNA]</scope>
</reference>
<organism>
    <name type="scientific">Human cytomegalovirus (strain AD169)</name>
    <name type="common">HHV-5</name>
    <name type="synonym">Human herpesvirus 5</name>
    <dbReference type="NCBI Taxonomy" id="10360"/>
    <lineage>
        <taxon>Viruses</taxon>
        <taxon>Duplodnaviria</taxon>
        <taxon>Heunggongvirae</taxon>
        <taxon>Peploviricota</taxon>
        <taxon>Herviviricetes</taxon>
        <taxon>Herpesvirales</taxon>
        <taxon>Orthoherpesviridae</taxon>
        <taxon>Betaherpesvirinae</taxon>
        <taxon>Cytomegalovirus</taxon>
        <taxon>Cytomegalovirus humanbeta5</taxon>
        <taxon>Human cytomegalovirus</taxon>
    </lineage>
</organism>
<gene>
    <name type="primary">UL67</name>
</gene>
<feature type="chain" id="PRO_0000115337" description="Uncharacterized protein UL67">
    <location>
        <begin position="1"/>
        <end position="113"/>
    </location>
</feature>
<feature type="region of interest" description="Disordered" evidence="1">
    <location>
        <begin position="28"/>
        <end position="55"/>
    </location>
</feature>
<organismHost>
    <name type="scientific">Homo sapiens</name>
    <name type="common">Human</name>
    <dbReference type="NCBI Taxonomy" id="9606"/>
</organismHost>
<evidence type="ECO:0000256" key="1">
    <source>
        <dbReference type="SAM" id="MobiDB-lite"/>
    </source>
</evidence>
<protein>
    <recommendedName>
        <fullName>Uncharacterized protein UL67</fullName>
    </recommendedName>
</protein>
<accession>P16747</accession>
<dbReference type="EMBL" id="X17403">
    <property type="protein sequence ID" value="CAA35382.1"/>
    <property type="molecule type" value="Genomic_DNA"/>
</dbReference>
<dbReference type="PIR" id="S09830">
    <property type="entry name" value="S09830"/>
</dbReference>
<dbReference type="Proteomes" id="UP000008991">
    <property type="component" value="Segment"/>
</dbReference>